<comment type="function">
    <text evidence="1">Part of a membrane-bound complex that couples electron transfer with translocation of ions across the membrane. Required to maintain the reduced state of SoxR.</text>
</comment>
<comment type="cofactor">
    <cofactor evidence="1">
        <name>[4Fe-4S] cluster</name>
        <dbReference type="ChEBI" id="CHEBI:49883"/>
    </cofactor>
    <text evidence="1">Binds 2 [4Fe-4S] clusters per subunit.</text>
</comment>
<comment type="subunit">
    <text evidence="1">The complex is composed of six subunits: RsxA, RsxB, RsxC, RsxD, RsxE and RsxG.</text>
</comment>
<comment type="subcellular location">
    <subcellularLocation>
        <location evidence="1">Cell inner membrane</location>
        <topology evidence="1">Peripheral membrane protein</topology>
    </subcellularLocation>
</comment>
<comment type="similarity">
    <text evidence="1">Belongs to the 4Fe4S bacterial-type ferredoxin family. RnfC subfamily.</text>
</comment>
<gene>
    <name evidence="1" type="primary">rsxC</name>
    <name type="ordered locus">BWG_1444</name>
</gene>
<protein>
    <recommendedName>
        <fullName evidence="1">Ion-translocating oxidoreductase complex subunit C</fullName>
        <ecNumber evidence="1">7.-.-.-</ecNumber>
    </recommendedName>
    <alternativeName>
        <fullName evidence="1">Rsx electron transport complex subunit C</fullName>
    </alternativeName>
</protein>
<proteinExistence type="inferred from homology"/>
<feature type="chain" id="PRO_1000206292" description="Ion-translocating oxidoreductase complex subunit C">
    <location>
        <begin position="1"/>
        <end position="740"/>
    </location>
</feature>
<feature type="domain" description="4Fe-4S ferredoxin-type 1" evidence="1">
    <location>
        <begin position="369"/>
        <end position="397"/>
    </location>
</feature>
<feature type="domain" description="4Fe-4S ferredoxin-type 2" evidence="1">
    <location>
        <begin position="407"/>
        <end position="436"/>
    </location>
</feature>
<feature type="region of interest" description="Disordered" evidence="2">
    <location>
        <begin position="571"/>
        <end position="590"/>
    </location>
</feature>
<feature type="region of interest" description="Disordered" evidence="2">
    <location>
        <begin position="602"/>
        <end position="716"/>
    </location>
</feature>
<feature type="compositionally biased region" description="Low complexity" evidence="2">
    <location>
        <begin position="573"/>
        <end position="583"/>
    </location>
</feature>
<feature type="compositionally biased region" description="Low complexity" evidence="2">
    <location>
        <begin position="637"/>
        <end position="647"/>
    </location>
</feature>
<feature type="binding site" evidence="1">
    <location>
        <position position="377"/>
    </location>
    <ligand>
        <name>[4Fe-4S] cluster</name>
        <dbReference type="ChEBI" id="CHEBI:49883"/>
        <label>1</label>
    </ligand>
</feature>
<feature type="binding site" evidence="1">
    <location>
        <position position="380"/>
    </location>
    <ligand>
        <name>[4Fe-4S] cluster</name>
        <dbReference type="ChEBI" id="CHEBI:49883"/>
        <label>1</label>
    </ligand>
</feature>
<feature type="binding site" evidence="1">
    <location>
        <position position="383"/>
    </location>
    <ligand>
        <name>[4Fe-4S] cluster</name>
        <dbReference type="ChEBI" id="CHEBI:49883"/>
        <label>1</label>
    </ligand>
</feature>
<feature type="binding site" evidence="1">
    <location>
        <position position="387"/>
    </location>
    <ligand>
        <name>[4Fe-4S] cluster</name>
        <dbReference type="ChEBI" id="CHEBI:49883"/>
        <label>2</label>
    </ligand>
</feature>
<feature type="binding site" evidence="1">
    <location>
        <position position="416"/>
    </location>
    <ligand>
        <name>[4Fe-4S] cluster</name>
        <dbReference type="ChEBI" id="CHEBI:49883"/>
        <label>2</label>
    </ligand>
</feature>
<feature type="binding site" evidence="1">
    <location>
        <position position="419"/>
    </location>
    <ligand>
        <name>[4Fe-4S] cluster</name>
        <dbReference type="ChEBI" id="CHEBI:49883"/>
        <label>2</label>
    </ligand>
</feature>
<feature type="binding site" evidence="1">
    <location>
        <position position="422"/>
    </location>
    <ligand>
        <name>[4Fe-4S] cluster</name>
        <dbReference type="ChEBI" id="CHEBI:49883"/>
        <label>2</label>
    </ligand>
</feature>
<feature type="binding site" evidence="1">
    <location>
        <position position="426"/>
    </location>
    <ligand>
        <name>[4Fe-4S] cluster</name>
        <dbReference type="ChEBI" id="CHEBI:49883"/>
        <label>1</label>
    </ligand>
</feature>
<keyword id="KW-0004">4Fe-4S</keyword>
<keyword id="KW-0997">Cell inner membrane</keyword>
<keyword id="KW-1003">Cell membrane</keyword>
<keyword id="KW-0249">Electron transport</keyword>
<keyword id="KW-0408">Iron</keyword>
<keyword id="KW-0411">Iron-sulfur</keyword>
<keyword id="KW-0472">Membrane</keyword>
<keyword id="KW-0479">Metal-binding</keyword>
<keyword id="KW-0677">Repeat</keyword>
<keyword id="KW-1278">Translocase</keyword>
<keyword id="KW-0813">Transport</keyword>
<sequence length="740" mass="80172">MLKLFSAFRKNKIWDFNGGIHPPEMKTQSNGTPLRQVPLAQRFVIPLKQHIGAEGELCVSVGDKVLRGQPLTRGRGKMLPVHAPTSGTVTAIAPHSTAHPSALAELSVIIDADGEDCWIPRDGWADYRTRSREELIERIHQFGVAGLGGAGFPTGVKLQGGGDKIETLIINAAECEPYITADDRLMQDCAAQVVEGIRILAHILQPREILIGIEDNKPQAISMLRAVLADSNDISLRVIPTKYPSGGAKQLTYILTGKQVPHGGRSSDIGVLMQNVGTAYAVKRAVIDGEPITERVVTLTGEAIARPGNVWARLGTPVRHLLNDAGFCPSADQMVIMGGPLMGFTLPWLDVPVVKITNCLLAPSANELGEPQEEQSCIRCSACADACPADLLPQQLYWFSKGQQHDKATTHNIADCIECGACAWVCPSNIPLVQYFRQEKAEIAAIRQEEKRAAEAKARFEARQARLEREKAARLERHKSAAVQPAAKDKDAIAAALARVKEKQAQATQPIVIKAGERPDNSAIIAAREARKAQARAKQAELQQTNDAATVADPRKTAVEAAIARAKARKLEQQQANAEPEQQVDPRKAAVEAAIARAKARKLEQQQANAEPEEQVDPRKAAVEAAIARAKARKLEQQQANAEPEQQVDPRKAAVEAAIARAKARKREQQPANAEPEEQVDPRKAAVEAAIARAKARKLEQQQANAVPEEQVDPRKAAVAAAIARAQAKKAAQQKVVNED</sequence>
<evidence type="ECO:0000255" key="1">
    <source>
        <dbReference type="HAMAP-Rule" id="MF_00461"/>
    </source>
</evidence>
<evidence type="ECO:0000256" key="2">
    <source>
        <dbReference type="SAM" id="MobiDB-lite"/>
    </source>
</evidence>
<reference key="1">
    <citation type="journal article" date="2009" name="J. Bacteriol.">
        <title>Genomic sequencing reveals regulatory mutations and recombinational events in the widely used MC4100 lineage of Escherichia coli K-12.</title>
        <authorList>
            <person name="Ferenci T."/>
            <person name="Zhou Z."/>
            <person name="Betteridge T."/>
            <person name="Ren Y."/>
            <person name="Liu Y."/>
            <person name="Feng L."/>
            <person name="Reeves P.R."/>
            <person name="Wang L."/>
        </authorList>
    </citation>
    <scope>NUCLEOTIDE SEQUENCE [LARGE SCALE GENOMIC DNA]</scope>
    <source>
        <strain>K12 / MC4100 / BW2952</strain>
    </source>
</reference>
<accession>C4ZY92</accession>
<name>RSXC_ECOBW</name>
<dbReference type="EC" id="7.-.-.-" evidence="1"/>
<dbReference type="EMBL" id="CP001396">
    <property type="protein sequence ID" value="ACR63216.1"/>
    <property type="molecule type" value="Genomic_DNA"/>
</dbReference>
<dbReference type="RefSeq" id="WP_000915778.1">
    <property type="nucleotide sequence ID" value="NC_012759.1"/>
</dbReference>
<dbReference type="SMR" id="C4ZY92"/>
<dbReference type="KEGG" id="ebw:BWG_1444"/>
<dbReference type="HOGENOM" id="CLU_010808_2_1_6"/>
<dbReference type="GO" id="GO:0005886">
    <property type="term" value="C:plasma membrane"/>
    <property type="evidence" value="ECO:0007669"/>
    <property type="project" value="UniProtKB-SubCell"/>
</dbReference>
<dbReference type="GO" id="GO:0051539">
    <property type="term" value="F:4 iron, 4 sulfur cluster binding"/>
    <property type="evidence" value="ECO:0007669"/>
    <property type="project" value="UniProtKB-KW"/>
</dbReference>
<dbReference type="GO" id="GO:0009055">
    <property type="term" value="F:electron transfer activity"/>
    <property type="evidence" value="ECO:0007669"/>
    <property type="project" value="InterPro"/>
</dbReference>
<dbReference type="GO" id="GO:0046872">
    <property type="term" value="F:metal ion binding"/>
    <property type="evidence" value="ECO:0007669"/>
    <property type="project" value="UniProtKB-KW"/>
</dbReference>
<dbReference type="GO" id="GO:0022900">
    <property type="term" value="P:electron transport chain"/>
    <property type="evidence" value="ECO:0007669"/>
    <property type="project" value="UniProtKB-UniRule"/>
</dbReference>
<dbReference type="Gene3D" id="3.30.70.20">
    <property type="match status" value="1"/>
</dbReference>
<dbReference type="Gene3D" id="3.40.50.11540">
    <property type="entry name" value="NADH-ubiquinone oxidoreductase 51kDa subunit"/>
    <property type="match status" value="1"/>
</dbReference>
<dbReference type="HAMAP" id="MF_00461">
    <property type="entry name" value="RsxC_RnfC"/>
    <property type="match status" value="1"/>
</dbReference>
<dbReference type="InterPro" id="IPR017896">
    <property type="entry name" value="4Fe4S_Fe-S-bd"/>
</dbReference>
<dbReference type="InterPro" id="IPR017900">
    <property type="entry name" value="4Fe4S_Fe_S_CS"/>
</dbReference>
<dbReference type="InterPro" id="IPR010208">
    <property type="entry name" value="Ion_transpt_RnfC/RsxC"/>
</dbReference>
<dbReference type="InterPro" id="IPR011538">
    <property type="entry name" value="Nuo51_FMN-bd"/>
</dbReference>
<dbReference type="InterPro" id="IPR037225">
    <property type="entry name" value="Nuo51_FMN-bd_sf"/>
</dbReference>
<dbReference type="InterPro" id="IPR026902">
    <property type="entry name" value="RnfC_N"/>
</dbReference>
<dbReference type="InterPro" id="IPR019554">
    <property type="entry name" value="Soluble_ligand-bd"/>
</dbReference>
<dbReference type="NCBIfam" id="NF003454">
    <property type="entry name" value="PRK05035.1"/>
    <property type="match status" value="1"/>
</dbReference>
<dbReference type="NCBIfam" id="TIGR01945">
    <property type="entry name" value="rnfC"/>
    <property type="match status" value="1"/>
</dbReference>
<dbReference type="PANTHER" id="PTHR43034">
    <property type="entry name" value="ION-TRANSLOCATING OXIDOREDUCTASE COMPLEX SUBUNIT C"/>
    <property type="match status" value="1"/>
</dbReference>
<dbReference type="PANTHER" id="PTHR43034:SF2">
    <property type="entry name" value="ION-TRANSLOCATING OXIDOREDUCTASE COMPLEX SUBUNIT C"/>
    <property type="match status" value="1"/>
</dbReference>
<dbReference type="Pfam" id="PF01512">
    <property type="entry name" value="Complex1_51K"/>
    <property type="match status" value="1"/>
</dbReference>
<dbReference type="Pfam" id="PF12838">
    <property type="entry name" value="Fer4_7"/>
    <property type="match status" value="1"/>
</dbReference>
<dbReference type="Pfam" id="PF13375">
    <property type="entry name" value="RnfC_N"/>
    <property type="match status" value="1"/>
</dbReference>
<dbReference type="Pfam" id="PF10531">
    <property type="entry name" value="SLBB"/>
    <property type="match status" value="1"/>
</dbReference>
<dbReference type="SUPFAM" id="SSF46548">
    <property type="entry name" value="alpha-helical ferredoxin"/>
    <property type="match status" value="1"/>
</dbReference>
<dbReference type="SUPFAM" id="SSF142019">
    <property type="entry name" value="Nqo1 FMN-binding domain-like"/>
    <property type="match status" value="1"/>
</dbReference>
<dbReference type="PROSITE" id="PS00198">
    <property type="entry name" value="4FE4S_FER_1"/>
    <property type="match status" value="2"/>
</dbReference>
<dbReference type="PROSITE" id="PS51379">
    <property type="entry name" value="4FE4S_FER_2"/>
    <property type="match status" value="2"/>
</dbReference>
<organism>
    <name type="scientific">Escherichia coli (strain K12 / MC4100 / BW2952)</name>
    <dbReference type="NCBI Taxonomy" id="595496"/>
    <lineage>
        <taxon>Bacteria</taxon>
        <taxon>Pseudomonadati</taxon>
        <taxon>Pseudomonadota</taxon>
        <taxon>Gammaproteobacteria</taxon>
        <taxon>Enterobacterales</taxon>
        <taxon>Enterobacteriaceae</taxon>
        <taxon>Escherichia</taxon>
    </lineage>
</organism>